<accession>P0A6Q1</accession>
<accession>P08324</accession>
<sequence>MSKIVKIIGREIIDSRGNPTVEAEVHLEGGFVGMAAAPSGASTGSREALELRDGDKSRFLGKGVTKAVAAVNGPIAQALIGKDAKDQAGIDKIMIDLDGTENKSKFGANAILAVSLANAKAAAAAKGMPLYEHIAELNGTPGKYSMPVPMMNIINGGEHADNNVDIQEFMIQPVGAKTVKEAIRMGSEVFHHLAKVLKAKGMNTAVGDEGGYAPNLGSNAEALAVIAEAVKAAGYELGKDITLAMDCAASEFYKDGKYVLAGEGNKAFTSEEFTHFLEELTKQYPIVSIEDGLDESDWDGFAYQTKVLGDKIQLVGDDLFVTNTKILKEGIEKGIANSILIKFNQIGSLTETLAAIKMAKDAGYTAVISHRSGETEDATIADLAVGTAAGQIKTGSMSRSDRVAKYNQLIRIEEALGEKAPYNGRKEIKGQA</sequence>
<keyword id="KW-0963">Cytoplasm</keyword>
<keyword id="KW-0324">Glycolysis</keyword>
<keyword id="KW-0456">Lyase</keyword>
<keyword id="KW-0460">Magnesium</keyword>
<keyword id="KW-0479">Metal-binding</keyword>
<keyword id="KW-1185">Reference proteome</keyword>
<keyword id="KW-0964">Secreted</keyword>
<gene>
    <name evidence="2" type="primary">eno</name>
    <name type="ordered locus">Z4094</name>
    <name type="ordered locus">ECs3639</name>
</gene>
<proteinExistence type="inferred from homology"/>
<dbReference type="EC" id="4.2.1.11" evidence="2"/>
<dbReference type="EMBL" id="AE005174">
    <property type="protein sequence ID" value="AAG57892.1"/>
    <property type="molecule type" value="Genomic_DNA"/>
</dbReference>
<dbReference type="EMBL" id="BA000007">
    <property type="protein sequence ID" value="BAB37062.1"/>
    <property type="molecule type" value="Genomic_DNA"/>
</dbReference>
<dbReference type="PIR" id="G91083">
    <property type="entry name" value="G91083"/>
</dbReference>
<dbReference type="RefSeq" id="NP_311666.1">
    <property type="nucleotide sequence ID" value="NC_002695.1"/>
</dbReference>
<dbReference type="RefSeq" id="WP_000036723.1">
    <property type="nucleotide sequence ID" value="NZ_VOAI01000003.1"/>
</dbReference>
<dbReference type="SMR" id="P0A6Q1"/>
<dbReference type="STRING" id="155864.Z4094"/>
<dbReference type="GeneID" id="916564"/>
<dbReference type="GeneID" id="93779219"/>
<dbReference type="KEGG" id="ece:Z4094"/>
<dbReference type="KEGG" id="ecs:ECs_3639"/>
<dbReference type="PATRIC" id="fig|386585.9.peg.3803"/>
<dbReference type="eggNOG" id="COG0148">
    <property type="taxonomic scope" value="Bacteria"/>
</dbReference>
<dbReference type="HOGENOM" id="CLU_031223_2_1_6"/>
<dbReference type="OMA" id="RCMMSHR"/>
<dbReference type="UniPathway" id="UPA00109">
    <property type="reaction ID" value="UER00187"/>
</dbReference>
<dbReference type="Proteomes" id="UP000000558">
    <property type="component" value="Chromosome"/>
</dbReference>
<dbReference type="Proteomes" id="UP000002519">
    <property type="component" value="Chromosome"/>
</dbReference>
<dbReference type="GO" id="GO:0009986">
    <property type="term" value="C:cell surface"/>
    <property type="evidence" value="ECO:0007669"/>
    <property type="project" value="UniProtKB-SubCell"/>
</dbReference>
<dbReference type="GO" id="GO:0005576">
    <property type="term" value="C:extracellular region"/>
    <property type="evidence" value="ECO:0007669"/>
    <property type="project" value="UniProtKB-SubCell"/>
</dbReference>
<dbReference type="GO" id="GO:0000015">
    <property type="term" value="C:phosphopyruvate hydratase complex"/>
    <property type="evidence" value="ECO:0007669"/>
    <property type="project" value="InterPro"/>
</dbReference>
<dbReference type="GO" id="GO:0000287">
    <property type="term" value="F:magnesium ion binding"/>
    <property type="evidence" value="ECO:0007669"/>
    <property type="project" value="UniProtKB-UniRule"/>
</dbReference>
<dbReference type="GO" id="GO:0004634">
    <property type="term" value="F:phosphopyruvate hydratase activity"/>
    <property type="evidence" value="ECO:0007669"/>
    <property type="project" value="UniProtKB-UniRule"/>
</dbReference>
<dbReference type="GO" id="GO:0006096">
    <property type="term" value="P:glycolytic process"/>
    <property type="evidence" value="ECO:0007669"/>
    <property type="project" value="UniProtKB-UniRule"/>
</dbReference>
<dbReference type="CDD" id="cd03313">
    <property type="entry name" value="enolase"/>
    <property type="match status" value="1"/>
</dbReference>
<dbReference type="FunFam" id="3.20.20.120:FF:000001">
    <property type="entry name" value="Enolase"/>
    <property type="match status" value="1"/>
</dbReference>
<dbReference type="FunFam" id="3.30.390.10:FF:000001">
    <property type="entry name" value="Enolase"/>
    <property type="match status" value="1"/>
</dbReference>
<dbReference type="Gene3D" id="3.20.20.120">
    <property type="entry name" value="Enolase-like C-terminal domain"/>
    <property type="match status" value="1"/>
</dbReference>
<dbReference type="Gene3D" id="3.30.390.10">
    <property type="entry name" value="Enolase-like, N-terminal domain"/>
    <property type="match status" value="1"/>
</dbReference>
<dbReference type="HAMAP" id="MF_00318">
    <property type="entry name" value="Enolase"/>
    <property type="match status" value="1"/>
</dbReference>
<dbReference type="InterPro" id="IPR000941">
    <property type="entry name" value="Enolase"/>
</dbReference>
<dbReference type="InterPro" id="IPR036849">
    <property type="entry name" value="Enolase-like_C_sf"/>
</dbReference>
<dbReference type="InterPro" id="IPR029017">
    <property type="entry name" value="Enolase-like_N"/>
</dbReference>
<dbReference type="InterPro" id="IPR020810">
    <property type="entry name" value="Enolase_C"/>
</dbReference>
<dbReference type="InterPro" id="IPR020809">
    <property type="entry name" value="Enolase_CS"/>
</dbReference>
<dbReference type="InterPro" id="IPR020811">
    <property type="entry name" value="Enolase_N"/>
</dbReference>
<dbReference type="NCBIfam" id="TIGR01060">
    <property type="entry name" value="eno"/>
    <property type="match status" value="1"/>
</dbReference>
<dbReference type="PANTHER" id="PTHR11902">
    <property type="entry name" value="ENOLASE"/>
    <property type="match status" value="1"/>
</dbReference>
<dbReference type="PANTHER" id="PTHR11902:SF1">
    <property type="entry name" value="ENOLASE"/>
    <property type="match status" value="1"/>
</dbReference>
<dbReference type="Pfam" id="PF00113">
    <property type="entry name" value="Enolase_C"/>
    <property type="match status" value="1"/>
</dbReference>
<dbReference type="Pfam" id="PF03952">
    <property type="entry name" value="Enolase_N"/>
    <property type="match status" value="1"/>
</dbReference>
<dbReference type="PIRSF" id="PIRSF001400">
    <property type="entry name" value="Enolase"/>
    <property type="match status" value="1"/>
</dbReference>
<dbReference type="PRINTS" id="PR00148">
    <property type="entry name" value="ENOLASE"/>
</dbReference>
<dbReference type="SFLD" id="SFLDS00001">
    <property type="entry name" value="Enolase"/>
    <property type="match status" value="1"/>
</dbReference>
<dbReference type="SFLD" id="SFLDF00002">
    <property type="entry name" value="enolase"/>
    <property type="match status" value="1"/>
</dbReference>
<dbReference type="SMART" id="SM01192">
    <property type="entry name" value="Enolase_C"/>
    <property type="match status" value="1"/>
</dbReference>
<dbReference type="SMART" id="SM01193">
    <property type="entry name" value="Enolase_N"/>
    <property type="match status" value="1"/>
</dbReference>
<dbReference type="SUPFAM" id="SSF51604">
    <property type="entry name" value="Enolase C-terminal domain-like"/>
    <property type="match status" value="1"/>
</dbReference>
<dbReference type="SUPFAM" id="SSF54826">
    <property type="entry name" value="Enolase N-terminal domain-like"/>
    <property type="match status" value="1"/>
</dbReference>
<dbReference type="PROSITE" id="PS00164">
    <property type="entry name" value="ENOLASE"/>
    <property type="match status" value="1"/>
</dbReference>
<protein>
    <recommendedName>
        <fullName evidence="2">Enolase</fullName>
        <ecNumber evidence="2">4.2.1.11</ecNumber>
    </recommendedName>
    <alternativeName>
        <fullName evidence="2">2-phospho-D-glycerate hydro-lyase</fullName>
    </alternativeName>
    <alternativeName>
        <fullName evidence="2">2-phosphoglycerate dehydratase</fullName>
    </alternativeName>
</protein>
<organism>
    <name type="scientific">Escherichia coli O157:H7</name>
    <dbReference type="NCBI Taxonomy" id="83334"/>
    <lineage>
        <taxon>Bacteria</taxon>
        <taxon>Pseudomonadati</taxon>
        <taxon>Pseudomonadota</taxon>
        <taxon>Gammaproteobacteria</taxon>
        <taxon>Enterobacterales</taxon>
        <taxon>Enterobacteriaceae</taxon>
        <taxon>Escherichia</taxon>
    </lineage>
</organism>
<reference key="1">
    <citation type="journal article" date="2001" name="Nature">
        <title>Genome sequence of enterohaemorrhagic Escherichia coli O157:H7.</title>
        <authorList>
            <person name="Perna N.T."/>
            <person name="Plunkett G. III"/>
            <person name="Burland V."/>
            <person name="Mau B."/>
            <person name="Glasner J.D."/>
            <person name="Rose D.J."/>
            <person name="Mayhew G.F."/>
            <person name="Evans P.S."/>
            <person name="Gregor J."/>
            <person name="Kirkpatrick H.A."/>
            <person name="Posfai G."/>
            <person name="Hackett J."/>
            <person name="Klink S."/>
            <person name="Boutin A."/>
            <person name="Shao Y."/>
            <person name="Miller L."/>
            <person name="Grotbeck E.J."/>
            <person name="Davis N.W."/>
            <person name="Lim A."/>
            <person name="Dimalanta E.T."/>
            <person name="Potamousis K."/>
            <person name="Apodaca J."/>
            <person name="Anantharaman T.S."/>
            <person name="Lin J."/>
            <person name="Yen G."/>
            <person name="Schwartz D.C."/>
            <person name="Welch R.A."/>
            <person name="Blattner F.R."/>
        </authorList>
    </citation>
    <scope>NUCLEOTIDE SEQUENCE [LARGE SCALE GENOMIC DNA]</scope>
    <source>
        <strain>O157:H7 / EDL933 / ATCC 700927 / EHEC</strain>
    </source>
</reference>
<reference key="2">
    <citation type="journal article" date="2001" name="DNA Res.">
        <title>Complete genome sequence of enterohemorrhagic Escherichia coli O157:H7 and genomic comparison with a laboratory strain K-12.</title>
        <authorList>
            <person name="Hayashi T."/>
            <person name="Makino K."/>
            <person name="Ohnishi M."/>
            <person name="Kurokawa K."/>
            <person name="Ishii K."/>
            <person name="Yokoyama K."/>
            <person name="Han C.-G."/>
            <person name="Ohtsubo E."/>
            <person name="Nakayama K."/>
            <person name="Murata T."/>
            <person name="Tanaka M."/>
            <person name="Tobe T."/>
            <person name="Iida T."/>
            <person name="Takami H."/>
            <person name="Honda T."/>
            <person name="Sasakawa C."/>
            <person name="Ogasawara N."/>
            <person name="Yasunaga T."/>
            <person name="Kuhara S."/>
            <person name="Shiba T."/>
            <person name="Hattori M."/>
            <person name="Shinagawa H."/>
        </authorList>
    </citation>
    <scope>NUCLEOTIDE SEQUENCE [LARGE SCALE GENOMIC DNA]</scope>
    <source>
        <strain>O157:H7 / Sakai / RIMD 0509952 / EHEC</strain>
    </source>
</reference>
<feature type="initiator methionine" description="Removed" evidence="1">
    <location>
        <position position="1"/>
    </location>
</feature>
<feature type="chain" id="PRO_0000133884" description="Enolase">
    <location>
        <begin position="2"/>
        <end position="432"/>
    </location>
</feature>
<feature type="active site" description="Proton donor" evidence="2">
    <location>
        <position position="209"/>
    </location>
</feature>
<feature type="active site" description="Proton acceptor" evidence="2">
    <location>
        <position position="342"/>
    </location>
</feature>
<feature type="binding site" evidence="2">
    <location>
        <position position="167"/>
    </location>
    <ligand>
        <name>(2R)-2-phosphoglycerate</name>
        <dbReference type="ChEBI" id="CHEBI:58289"/>
    </ligand>
</feature>
<feature type="binding site" evidence="2">
    <location>
        <position position="246"/>
    </location>
    <ligand>
        <name>Mg(2+)</name>
        <dbReference type="ChEBI" id="CHEBI:18420"/>
    </ligand>
</feature>
<feature type="binding site" evidence="2">
    <location>
        <position position="290"/>
    </location>
    <ligand>
        <name>Mg(2+)</name>
        <dbReference type="ChEBI" id="CHEBI:18420"/>
    </ligand>
</feature>
<feature type="binding site" evidence="2">
    <location>
        <position position="317"/>
    </location>
    <ligand>
        <name>Mg(2+)</name>
        <dbReference type="ChEBI" id="CHEBI:18420"/>
    </ligand>
</feature>
<feature type="binding site" evidence="2">
    <location>
        <position position="342"/>
    </location>
    <ligand>
        <name>(2R)-2-phosphoglycerate</name>
        <dbReference type="ChEBI" id="CHEBI:58289"/>
    </ligand>
</feature>
<feature type="binding site" evidence="2">
    <location>
        <position position="371"/>
    </location>
    <ligand>
        <name>(2R)-2-phosphoglycerate</name>
        <dbReference type="ChEBI" id="CHEBI:58289"/>
    </ligand>
</feature>
<feature type="binding site" evidence="2">
    <location>
        <position position="372"/>
    </location>
    <ligand>
        <name>(2R)-2-phosphoglycerate</name>
        <dbReference type="ChEBI" id="CHEBI:58289"/>
    </ligand>
</feature>
<feature type="binding site" evidence="2">
    <location>
        <position position="393"/>
    </location>
    <ligand>
        <name>(2R)-2-phosphoglycerate</name>
        <dbReference type="ChEBI" id="CHEBI:58289"/>
    </ligand>
</feature>
<evidence type="ECO:0000250" key="1"/>
<evidence type="ECO:0000255" key="2">
    <source>
        <dbReference type="HAMAP-Rule" id="MF_00318"/>
    </source>
</evidence>
<comment type="function">
    <text evidence="2">Catalyzes the reversible conversion of 2-phosphoglycerate (2-PG) into phosphoenolpyruvate (PEP). It is essential for the degradation of carbohydrates via glycolysis.</text>
</comment>
<comment type="catalytic activity">
    <reaction evidence="2">
        <text>(2R)-2-phosphoglycerate = phosphoenolpyruvate + H2O</text>
        <dbReference type="Rhea" id="RHEA:10164"/>
        <dbReference type="ChEBI" id="CHEBI:15377"/>
        <dbReference type="ChEBI" id="CHEBI:58289"/>
        <dbReference type="ChEBI" id="CHEBI:58702"/>
        <dbReference type="EC" id="4.2.1.11"/>
    </reaction>
</comment>
<comment type="cofactor">
    <cofactor evidence="2">
        <name>Mg(2+)</name>
        <dbReference type="ChEBI" id="CHEBI:18420"/>
    </cofactor>
    <text evidence="2">Binds a second Mg(2+) ion via substrate during catalysis.</text>
</comment>
<comment type="pathway">
    <text evidence="2">Carbohydrate degradation; glycolysis; pyruvate from D-glyceraldehyde 3-phosphate: step 4/5.</text>
</comment>
<comment type="subunit">
    <text evidence="2">Component of the RNA degradosome, a multiprotein complex involved in RNA processing and mRNA degradation.</text>
</comment>
<comment type="subcellular location">
    <subcellularLocation>
        <location evidence="2">Cytoplasm</location>
    </subcellularLocation>
    <subcellularLocation>
        <location evidence="2">Secreted</location>
    </subcellularLocation>
    <subcellularLocation>
        <location evidence="2">Cell surface</location>
    </subcellularLocation>
    <text evidence="2">Fractions of enolase are present in both the cytoplasm and on the cell surface.</text>
</comment>
<comment type="similarity">
    <text evidence="2">Belongs to the enolase family.</text>
</comment>
<name>ENO_ECO57</name>